<dbReference type="EMBL" id="M59767">
    <property type="protein sequence ID" value="AAA29695.1"/>
    <property type="molecule type" value="Genomic_DNA"/>
</dbReference>
<dbReference type="GlyCosmos" id="Q03644">
    <property type="glycosylation" value="6 sites, No reported glycans"/>
</dbReference>
<dbReference type="GO" id="GO:0005886">
    <property type="term" value="C:plasma membrane"/>
    <property type="evidence" value="ECO:0007669"/>
    <property type="project" value="UniProtKB-SubCell"/>
</dbReference>
<dbReference type="GO" id="GO:0098552">
    <property type="term" value="C:side of membrane"/>
    <property type="evidence" value="ECO:0007669"/>
    <property type="project" value="UniProtKB-KW"/>
</dbReference>
<dbReference type="GO" id="GO:0007155">
    <property type="term" value="P:cell adhesion"/>
    <property type="evidence" value="ECO:0007669"/>
    <property type="project" value="InterPro"/>
</dbReference>
<dbReference type="InterPro" id="IPR001136">
    <property type="entry name" value="MSA2"/>
</dbReference>
<dbReference type="Pfam" id="PF00985">
    <property type="entry name" value="MSA_2"/>
    <property type="match status" value="1"/>
</dbReference>
<dbReference type="PIRSF" id="PIRSF003575">
    <property type="entry name" value="MSA_2"/>
    <property type="match status" value="1"/>
</dbReference>
<accession>Q03644</accession>
<keyword id="KW-1003">Cell membrane</keyword>
<keyword id="KW-1015">Disulfide bond</keyword>
<keyword id="KW-0325">Glycoprotein</keyword>
<keyword id="KW-0336">GPI-anchor</keyword>
<keyword id="KW-0449">Lipoprotein</keyword>
<keyword id="KW-0461">Malaria</keyword>
<keyword id="KW-0472">Membrane</keyword>
<keyword id="KW-0477">Merozoite</keyword>
<keyword id="KW-0677">Repeat</keyword>
<keyword id="KW-0732">Signal</keyword>
<name>MSA2_PLAFI</name>
<gene>
    <name evidence="3" type="primary">MSP2</name>
    <name evidence="7" type="synonym">MSA2</name>
</gene>
<organism>
    <name type="scientific">Plasmodium falciparum (isolate imr143)</name>
    <dbReference type="NCBI Taxonomy" id="57268"/>
    <lineage>
        <taxon>Eukaryota</taxon>
        <taxon>Sar</taxon>
        <taxon>Alveolata</taxon>
        <taxon>Apicomplexa</taxon>
        <taxon>Aconoidasida</taxon>
        <taxon>Haemosporida</taxon>
        <taxon>Plasmodiidae</taxon>
        <taxon>Plasmodium</taxon>
        <taxon>Plasmodium (Laverania)</taxon>
    </lineage>
</organism>
<comment type="function">
    <text evidence="3">May play a role in the merozoite attachment to the erythrocyte.</text>
</comment>
<comment type="subcellular location">
    <subcellularLocation>
        <location evidence="3">Cell membrane</location>
        <topology evidence="1">Lipid-anchor</topology>
        <topology evidence="1">GPI-anchor</topology>
    </subcellularLocation>
    <text evidence="3">During host erythrocyte invasion by merozoites, carried into invaded erythrocytes where it is rapidly degraded.</text>
</comment>
<comment type="domain">
    <text evidence="3">The N-terminal region appears to be involved in lipid binding.</text>
</comment>
<comment type="polymorphism">
    <text evidence="6">The sequence varies across Plasmodium strains (PubMed:2000383). All variants share conserved N- and C-terminal regions; however, they belong to two allelic families, represented by 3D7 strain and FC27 strain sequences respectively, distinguished by tandem repeats and dimorphic flanking sequences within the central region of the protein (PubMed:2000383).</text>
</comment>
<sequence>MKVIKTLSIINFFIFVTFNIKNESKYSNTFINNAYNMSIRRSMEESKPPTGAVAGSGAGAGSGAGAVAGSGAGAVAGSGAGAVAGSGAGAVAGSGAGAVAGSGAVAGSGAGNGANPGADAERSPSTPATTTTTTTTNDAEASTSTSSENRNHNNAETNPKGKGEVQKPNQANKETQNNSNVQQDSQTKSNVPRTQDADTKSPTAQPEQAENSAPTAEQTESPELQSAPENKGTGQHGHMHGSRNNHPQNTSDSQKECTDGNKENCGAATSLLNNSSNIASINKFVVLISATLVLSFAIFI</sequence>
<evidence type="ECO:0000250" key="1">
    <source>
        <dbReference type="UniProtKB" id="P19260"/>
    </source>
</evidence>
<evidence type="ECO:0000250" key="2">
    <source>
        <dbReference type="UniProtKB" id="P19599"/>
    </source>
</evidence>
<evidence type="ECO:0000250" key="3">
    <source>
        <dbReference type="UniProtKB" id="P50498"/>
    </source>
</evidence>
<evidence type="ECO:0000255" key="4"/>
<evidence type="ECO:0000256" key="5">
    <source>
        <dbReference type="SAM" id="MobiDB-lite"/>
    </source>
</evidence>
<evidence type="ECO:0000269" key="6">
    <source>
    </source>
</evidence>
<evidence type="ECO:0000303" key="7">
    <source>
    </source>
</evidence>
<proteinExistence type="inferred from homology"/>
<feature type="signal peptide" evidence="4">
    <location>
        <begin position="1"/>
        <end position="20"/>
    </location>
</feature>
<feature type="chain" id="PRO_0000024598" description="Merozoite surface protein 2">
    <location>
        <begin position="21"/>
        <end position="274"/>
    </location>
</feature>
<feature type="propeptide" id="PRO_0000024599" description="Removed in mature form" evidence="1">
    <location>
        <begin position="275"/>
        <end position="300"/>
    </location>
</feature>
<feature type="repeat" description="1; inverted" evidence="6">
    <location>
        <begin position="51"/>
        <end position="58"/>
    </location>
</feature>
<feature type="repeat" description="2" evidence="6">
    <location>
        <begin position="61"/>
        <end position="68"/>
    </location>
</feature>
<feature type="repeat" description="3" evidence="6">
    <location>
        <begin position="69"/>
        <end position="76"/>
    </location>
</feature>
<feature type="repeat" description="4" evidence="6">
    <location>
        <begin position="77"/>
        <end position="84"/>
    </location>
</feature>
<feature type="repeat" description="5" evidence="6">
    <location>
        <begin position="85"/>
        <end position="92"/>
    </location>
</feature>
<feature type="repeat" description="6" evidence="6">
    <location>
        <begin position="93"/>
        <end position="100"/>
    </location>
</feature>
<feature type="repeat" description="7; inverted" evidence="6">
    <location>
        <begin position="103"/>
        <end position="110"/>
    </location>
</feature>
<feature type="region of interest" description="Polymorphic region" evidence="6">
    <location>
        <begin position="44"/>
        <end position="226"/>
    </location>
</feature>
<feature type="region of interest" description="7 X 8 AA tandem repeats of G-S-G-A-G-A-V-A" evidence="6">
    <location>
        <begin position="51"/>
        <end position="110"/>
    </location>
</feature>
<feature type="region of interest" description="Disordered" evidence="5">
    <location>
        <begin position="111"/>
        <end position="261"/>
    </location>
</feature>
<feature type="compositionally biased region" description="Low complexity" evidence="5">
    <location>
        <begin position="123"/>
        <end position="148"/>
    </location>
</feature>
<feature type="compositionally biased region" description="Basic and acidic residues" evidence="5">
    <location>
        <begin position="149"/>
        <end position="165"/>
    </location>
</feature>
<feature type="compositionally biased region" description="Polar residues" evidence="5">
    <location>
        <begin position="167"/>
        <end position="193"/>
    </location>
</feature>
<feature type="compositionally biased region" description="Polar residues" evidence="5">
    <location>
        <begin position="200"/>
        <end position="228"/>
    </location>
</feature>
<feature type="lipid moiety-binding region" description="GPI-anchor amidated asparagine" evidence="1">
    <location>
        <position position="274"/>
    </location>
</feature>
<feature type="glycosylation site" description="N-linked (GlcNAc...) asparagine" evidence="4">
    <location>
        <position position="22"/>
    </location>
</feature>
<feature type="glycosylation site" description="N-linked (GlcNAc...) asparagine" evidence="4">
    <location>
        <position position="36"/>
    </location>
</feature>
<feature type="glycosylation site" description="N-linked (GlcNAc...) asparagine" evidence="4">
    <location>
        <position position="177"/>
    </location>
</feature>
<feature type="glycosylation site" description="N-linked (GlcNAc...) asparagine" evidence="4">
    <location>
        <position position="249"/>
    </location>
</feature>
<feature type="glycosylation site" description="N-linked (GlcNAc...) asparagine" evidence="4">
    <location>
        <position position="273"/>
    </location>
</feature>
<feature type="glycosylation site" description="N-linked (GlcNAc...) asparagine" evidence="4">
    <location>
        <position position="274"/>
    </location>
</feature>
<feature type="disulfide bond" evidence="2">
    <location>
        <begin position="257"/>
        <end position="265"/>
    </location>
</feature>
<reference key="1">
    <citation type="journal article" date="1991" name="Proc. Natl. Acad. Sci. U.S.A.">
        <title>Structural diversity in the Plasmodium falciparum merozoite surface antigen 2.</title>
        <authorList>
            <person name="Smythe J.A."/>
            <person name="Coppel R.L."/>
            <person name="Day K.P."/>
            <person name="Martin R.K."/>
            <person name="Oduola A.M.J."/>
            <person name="Kemp D.J."/>
            <person name="Anders R.F."/>
        </authorList>
    </citation>
    <scope>NUCLEOTIDE SEQUENCE [GENOMIC DNA]</scope>
    <scope>POLYMORPHISM</scope>
    <scope>REPEATS</scope>
</reference>
<protein>
    <recommendedName>
        <fullName evidence="3">Merozoite surface protein 2</fullName>
    </recommendedName>
    <alternativeName>
        <fullName evidence="7">Merozoite surface antigen 2</fullName>
        <shortName evidence="7">MSA-2</shortName>
    </alternativeName>
</protein>